<name>YIDD_FRATN</name>
<proteinExistence type="inferred from homology"/>
<comment type="function">
    <text evidence="1">Could be involved in insertion of integral membrane proteins into the membrane.</text>
</comment>
<comment type="subcellular location">
    <subcellularLocation>
        <location evidence="1">Cell inner membrane</location>
        <topology evidence="1">Peripheral membrane protein</topology>
        <orientation evidence="1">Cytoplasmic side</orientation>
    </subcellularLocation>
</comment>
<comment type="similarity">
    <text evidence="1">Belongs to the UPF0161 family.</text>
</comment>
<organism>
    <name type="scientific">Francisella tularensis subsp. novicida (strain U112)</name>
    <dbReference type="NCBI Taxonomy" id="401614"/>
    <lineage>
        <taxon>Bacteria</taxon>
        <taxon>Pseudomonadati</taxon>
        <taxon>Pseudomonadota</taxon>
        <taxon>Gammaproteobacteria</taxon>
        <taxon>Thiotrichales</taxon>
        <taxon>Francisellaceae</taxon>
        <taxon>Francisella</taxon>
    </lineage>
</organism>
<gene>
    <name type="ordered locus">FTN_0074</name>
</gene>
<accession>A0Q420</accession>
<feature type="chain" id="PRO_1000013090" description="Putative membrane protein insertion efficiency factor">
    <location>
        <begin position="1"/>
        <end position="82"/>
    </location>
</feature>
<sequence length="82" mass="9753">MFFKKITLIPFVMLINLYRYCISPFIPARCRYYPTCSEYALEALKTHGILKGLYLTTRRLLRCHPLSKRDYYDPVPCKNKKG</sequence>
<reference key="1">
    <citation type="journal article" date="2007" name="Genome Biol.">
        <title>Comparison of Francisella tularensis genomes reveals evolutionary events associated with the emergence of human pathogenic strains.</title>
        <authorList>
            <person name="Rohmer L."/>
            <person name="Fong C."/>
            <person name="Abmayr S."/>
            <person name="Wasnick M."/>
            <person name="Larson Freeman T.J."/>
            <person name="Radey M."/>
            <person name="Guina T."/>
            <person name="Svensson K."/>
            <person name="Hayden H.S."/>
            <person name="Jacobs M."/>
            <person name="Gallagher L.A."/>
            <person name="Manoil C."/>
            <person name="Ernst R.K."/>
            <person name="Drees B."/>
            <person name="Buckley D."/>
            <person name="Haugen E."/>
            <person name="Bovee D."/>
            <person name="Zhou Y."/>
            <person name="Chang J."/>
            <person name="Levy R."/>
            <person name="Lim R."/>
            <person name="Gillett W."/>
            <person name="Guenthener D."/>
            <person name="Kang A."/>
            <person name="Shaffer S.A."/>
            <person name="Taylor G."/>
            <person name="Chen J."/>
            <person name="Gallis B."/>
            <person name="D'Argenio D.A."/>
            <person name="Forsman M."/>
            <person name="Olson M.V."/>
            <person name="Goodlett D.R."/>
            <person name="Kaul R."/>
            <person name="Miller S.I."/>
            <person name="Brittnacher M.J."/>
        </authorList>
    </citation>
    <scope>NUCLEOTIDE SEQUENCE [LARGE SCALE GENOMIC DNA]</scope>
    <source>
        <strain>U112</strain>
    </source>
</reference>
<evidence type="ECO:0000255" key="1">
    <source>
        <dbReference type="HAMAP-Rule" id="MF_00386"/>
    </source>
</evidence>
<dbReference type="EMBL" id="CP000439">
    <property type="protein sequence ID" value="ABK88985.1"/>
    <property type="molecule type" value="Genomic_DNA"/>
</dbReference>
<dbReference type="KEGG" id="ftn:FTN_0074"/>
<dbReference type="Proteomes" id="UP000000762">
    <property type="component" value="Chromosome"/>
</dbReference>
<dbReference type="GO" id="GO:0005886">
    <property type="term" value="C:plasma membrane"/>
    <property type="evidence" value="ECO:0007669"/>
    <property type="project" value="UniProtKB-SubCell"/>
</dbReference>
<dbReference type="HAMAP" id="MF_00386">
    <property type="entry name" value="UPF0161_YidD"/>
    <property type="match status" value="1"/>
</dbReference>
<dbReference type="InterPro" id="IPR002696">
    <property type="entry name" value="Membr_insert_effic_factor_YidD"/>
</dbReference>
<dbReference type="NCBIfam" id="TIGR00278">
    <property type="entry name" value="membrane protein insertion efficiency factor YidD"/>
    <property type="match status" value="1"/>
</dbReference>
<dbReference type="PANTHER" id="PTHR33383">
    <property type="entry name" value="MEMBRANE PROTEIN INSERTION EFFICIENCY FACTOR-RELATED"/>
    <property type="match status" value="1"/>
</dbReference>
<dbReference type="PANTHER" id="PTHR33383:SF1">
    <property type="entry name" value="MEMBRANE PROTEIN INSERTION EFFICIENCY FACTOR-RELATED"/>
    <property type="match status" value="1"/>
</dbReference>
<dbReference type="Pfam" id="PF01809">
    <property type="entry name" value="YidD"/>
    <property type="match status" value="1"/>
</dbReference>
<dbReference type="SMART" id="SM01234">
    <property type="entry name" value="Haemolytic"/>
    <property type="match status" value="1"/>
</dbReference>
<protein>
    <recommendedName>
        <fullName evidence="1">Putative membrane protein insertion efficiency factor</fullName>
    </recommendedName>
</protein>
<keyword id="KW-0997">Cell inner membrane</keyword>
<keyword id="KW-1003">Cell membrane</keyword>
<keyword id="KW-0472">Membrane</keyword>